<feature type="chain" id="PRO_0000270176" description="Src kinase-associated phosphoprotein 1">
    <location>
        <begin position="1"/>
        <end position="363"/>
    </location>
</feature>
<feature type="domain" description="PH" evidence="2">
    <location>
        <begin position="118"/>
        <end position="221"/>
    </location>
</feature>
<feature type="domain" description="SH3" evidence="3">
    <location>
        <begin position="301"/>
        <end position="362"/>
    </location>
</feature>
<feature type="region of interest" description="Disordered" evidence="4">
    <location>
        <begin position="62"/>
        <end position="94"/>
    </location>
</feature>
<feature type="region of interest" description="Disordered" evidence="4">
    <location>
        <begin position="227"/>
        <end position="273"/>
    </location>
</feature>
<feature type="compositionally biased region" description="Low complexity" evidence="4">
    <location>
        <begin position="84"/>
        <end position="94"/>
    </location>
</feature>
<feature type="compositionally biased region" description="Acidic residues" evidence="4">
    <location>
        <begin position="230"/>
        <end position="248"/>
    </location>
</feature>
<accession>Q1KKW7</accession>
<dbReference type="EMBL" id="DQ481666">
    <property type="protein sequence ID" value="ABF22427.1"/>
    <property type="molecule type" value="Genomic_DNA"/>
</dbReference>
<dbReference type="SMR" id="Q1KKW7"/>
<dbReference type="STRING" id="31033.ENSTRUP00000080549"/>
<dbReference type="eggNOG" id="ENOG502QSSU">
    <property type="taxonomic scope" value="Eukaryota"/>
</dbReference>
<dbReference type="HOGENOM" id="CLU_062032_0_0_1"/>
<dbReference type="InParanoid" id="Q1KKW7"/>
<dbReference type="Proteomes" id="UP000005226">
    <property type="component" value="Unplaced"/>
</dbReference>
<dbReference type="GO" id="GO:0005737">
    <property type="term" value="C:cytoplasm"/>
    <property type="evidence" value="ECO:0007669"/>
    <property type="project" value="UniProtKB-SubCell"/>
</dbReference>
<dbReference type="GO" id="GO:0005634">
    <property type="term" value="C:nucleus"/>
    <property type="evidence" value="ECO:0007669"/>
    <property type="project" value="UniProtKB-SubCell"/>
</dbReference>
<dbReference type="GO" id="GO:0005886">
    <property type="term" value="C:plasma membrane"/>
    <property type="evidence" value="ECO:0007669"/>
    <property type="project" value="UniProtKB-SubCell"/>
</dbReference>
<dbReference type="GO" id="GO:0002250">
    <property type="term" value="P:adaptive immune response"/>
    <property type="evidence" value="ECO:0007669"/>
    <property type="project" value="UniProtKB-KW"/>
</dbReference>
<dbReference type="CDD" id="cd12044">
    <property type="entry name" value="SH3_SKAP1"/>
    <property type="match status" value="1"/>
</dbReference>
<dbReference type="FunFam" id="2.30.30.40:FF:000097">
    <property type="entry name" value="Putative src kinase-associated phosphoprotein 2"/>
    <property type="match status" value="1"/>
</dbReference>
<dbReference type="Gene3D" id="6.10.250.220">
    <property type="match status" value="1"/>
</dbReference>
<dbReference type="Gene3D" id="2.30.29.30">
    <property type="entry name" value="Pleckstrin-homology domain (PH domain)/Phosphotyrosine-binding domain (PTB)"/>
    <property type="match status" value="1"/>
</dbReference>
<dbReference type="Gene3D" id="2.30.30.40">
    <property type="entry name" value="SH3 Domains"/>
    <property type="match status" value="1"/>
</dbReference>
<dbReference type="InterPro" id="IPR011993">
    <property type="entry name" value="PH-like_dom_sf"/>
</dbReference>
<dbReference type="InterPro" id="IPR001849">
    <property type="entry name" value="PH_domain"/>
</dbReference>
<dbReference type="InterPro" id="IPR036028">
    <property type="entry name" value="SH3-like_dom_sf"/>
</dbReference>
<dbReference type="InterPro" id="IPR001452">
    <property type="entry name" value="SH3_domain"/>
</dbReference>
<dbReference type="InterPro" id="IPR035765">
    <property type="entry name" value="SKAP1_SH3"/>
</dbReference>
<dbReference type="InterPro" id="IPR037781">
    <property type="entry name" value="SKAP_fam"/>
</dbReference>
<dbReference type="PANTHER" id="PTHR15129:SF1">
    <property type="entry name" value="SRC KINASE-ASSOCIATED PHOSPHOPROTEIN 1"/>
    <property type="match status" value="1"/>
</dbReference>
<dbReference type="PANTHER" id="PTHR15129">
    <property type="entry name" value="SRC-ASSOCIATED ADAPTOR PROTEIN"/>
    <property type="match status" value="1"/>
</dbReference>
<dbReference type="Pfam" id="PF00169">
    <property type="entry name" value="PH"/>
    <property type="match status" value="1"/>
</dbReference>
<dbReference type="Pfam" id="PF14604">
    <property type="entry name" value="SH3_9"/>
    <property type="match status" value="1"/>
</dbReference>
<dbReference type="SMART" id="SM00233">
    <property type="entry name" value="PH"/>
    <property type="match status" value="1"/>
</dbReference>
<dbReference type="SMART" id="SM00326">
    <property type="entry name" value="SH3"/>
    <property type="match status" value="1"/>
</dbReference>
<dbReference type="SUPFAM" id="SSF50729">
    <property type="entry name" value="PH domain-like"/>
    <property type="match status" value="1"/>
</dbReference>
<dbReference type="SUPFAM" id="SSF50044">
    <property type="entry name" value="SH3-domain"/>
    <property type="match status" value="1"/>
</dbReference>
<dbReference type="PROSITE" id="PS50003">
    <property type="entry name" value="PH_DOMAIN"/>
    <property type="match status" value="1"/>
</dbReference>
<dbReference type="PROSITE" id="PS50002">
    <property type="entry name" value="SH3"/>
    <property type="match status" value="1"/>
</dbReference>
<name>SKAP1_TAKRU</name>
<evidence type="ECO:0000250" key="1"/>
<evidence type="ECO:0000255" key="2">
    <source>
        <dbReference type="PROSITE-ProRule" id="PRU00145"/>
    </source>
</evidence>
<evidence type="ECO:0000255" key="3">
    <source>
        <dbReference type="PROSITE-ProRule" id="PRU00192"/>
    </source>
</evidence>
<evidence type="ECO:0000256" key="4">
    <source>
        <dbReference type="SAM" id="MobiDB-lite"/>
    </source>
</evidence>
<evidence type="ECO:0000305" key="5"/>
<organism>
    <name type="scientific">Takifugu rubripes</name>
    <name type="common">Japanese pufferfish</name>
    <name type="synonym">Fugu rubripes</name>
    <dbReference type="NCBI Taxonomy" id="31033"/>
    <lineage>
        <taxon>Eukaryota</taxon>
        <taxon>Metazoa</taxon>
        <taxon>Chordata</taxon>
        <taxon>Craniata</taxon>
        <taxon>Vertebrata</taxon>
        <taxon>Euteleostomi</taxon>
        <taxon>Actinopterygii</taxon>
        <taxon>Neopterygii</taxon>
        <taxon>Teleostei</taxon>
        <taxon>Neoteleostei</taxon>
        <taxon>Acanthomorphata</taxon>
        <taxon>Eupercaria</taxon>
        <taxon>Tetraodontiformes</taxon>
        <taxon>Tetradontoidea</taxon>
        <taxon>Tetraodontidae</taxon>
        <taxon>Takifugu</taxon>
    </lineage>
</organism>
<keyword id="KW-1064">Adaptive immunity</keyword>
<keyword id="KW-1003">Cell membrane</keyword>
<keyword id="KW-0963">Cytoplasm</keyword>
<keyword id="KW-0391">Immunity</keyword>
<keyword id="KW-0472">Membrane</keyword>
<keyword id="KW-0539">Nucleus</keyword>
<keyword id="KW-0597">Phosphoprotein</keyword>
<keyword id="KW-1185">Reference proteome</keyword>
<keyword id="KW-0728">SH3 domain</keyword>
<proteinExistence type="inferred from homology"/>
<gene>
    <name type="primary">skap1</name>
    <name type="synonym">scap1</name>
</gene>
<comment type="function">
    <text evidence="1">Positively regulates T-cell receptor signaling. Required for optimal conjugation between T-cells and antigen-presenting cells (By similarity).</text>
</comment>
<comment type="subunit">
    <text evidence="1">Homodimer.</text>
</comment>
<comment type="subcellular location">
    <subcellularLocation>
        <location evidence="1">Cytoplasm</location>
    </subcellularLocation>
    <subcellularLocation>
        <location evidence="1">Nucleus</location>
    </subcellularLocation>
    <subcellularLocation>
        <location evidence="1">Cell membrane</location>
    </subcellularLocation>
    <text evidence="1">Upon T-cell stimulation, translocates to lipid rafts at the cell membrane.</text>
</comment>
<comment type="PTM">
    <text evidence="1">Phosphorylated on tyrosines.</text>
</comment>
<comment type="similarity">
    <text evidence="5">Belongs to the SKAP family.</text>
</comment>
<protein>
    <recommendedName>
        <fullName>Src kinase-associated phosphoprotein 1</fullName>
    </recommendedName>
    <alternativeName>
        <fullName>Src family-associated phosphoprotein 1</fullName>
    </alternativeName>
</protein>
<sequence length="363" mass="41279">MEAVDLLANVSVTGLLLFWGDCEFFVSEILYDENLSENAQETRKVLLNNFRVVHVRNPQEFPFPSDYKEEDGSDDNRSSSLGRSAQSDDASLASDNQDDGIPEYFGDIPPVAAQDIVNVLKQGYLEKKRKDHSFFGSEWQKRWCVLNNLVFYYFGSDKDKQQKGSFYISDYSVQLVTNLRKDSRKTSCFEFFAPGRRPFQFTAGSPQEAKEWVDQIKIVLRDLSSTVIPVDDEEEEEEEEETYDDIEGEGGPPLPQPLSGTWGRGGDTGAADEEDEDIYEVLPEESPDSADGSMERNNKPEYANYYQGLWDCSADEPDELPFQRGDLIYIISKEYNIYGWWVGELNGAVGIVPKDFLHPAYIL</sequence>
<reference key="1">
    <citation type="journal article" date="2006" name="Proc. Natl. Acad. Sci. U.S.A.">
        <title>Highly conserved syntenic blocks at the vertebrate Hox loci and conserved regulatory elements within and outside Hox gene clusters.</title>
        <authorList>
            <person name="Lee A.P."/>
            <person name="Koh E.G.L."/>
            <person name="Tay A."/>
            <person name="Brenner S."/>
            <person name="Venkatesh B."/>
        </authorList>
    </citation>
    <scope>NUCLEOTIDE SEQUENCE [GENOMIC DNA]</scope>
</reference>